<feature type="chain" id="PRO_0000163785" description="Ribonuclease Y">
    <location>
        <begin position="1"/>
        <end position="520"/>
    </location>
</feature>
<feature type="transmembrane region" description="Helical" evidence="1">
    <location>
        <begin position="3"/>
        <end position="23"/>
    </location>
</feature>
<feature type="domain" description="KH" evidence="1">
    <location>
        <begin position="210"/>
        <end position="273"/>
    </location>
</feature>
<feature type="domain" description="HD" evidence="2">
    <location>
        <begin position="336"/>
        <end position="429"/>
    </location>
</feature>
<feature type="region of interest" description="Disordered" evidence="3">
    <location>
        <begin position="81"/>
        <end position="125"/>
    </location>
</feature>
<feature type="compositionally biased region" description="Basic and acidic residues" evidence="3">
    <location>
        <begin position="81"/>
        <end position="118"/>
    </location>
</feature>
<reference key="1">
    <citation type="journal article" date="2002" name="Nucleic Acids Res.">
        <title>Genome sequence of Oceanobacillus iheyensis isolated from the Iheya Ridge and its unexpected adaptive capabilities to extreme environments.</title>
        <authorList>
            <person name="Takami H."/>
            <person name="Takaki Y."/>
            <person name="Uchiyama I."/>
        </authorList>
    </citation>
    <scope>NUCLEOTIDE SEQUENCE [LARGE SCALE GENOMIC DNA]</scope>
    <source>
        <strain>DSM 14371 / CIP 107618 / JCM 11309 / KCTC 3954 / HTE831</strain>
    </source>
</reference>
<protein>
    <recommendedName>
        <fullName evidence="1">Ribonuclease Y</fullName>
        <shortName evidence="1">RNase Y</shortName>
        <ecNumber evidence="1">3.1.-.-</ecNumber>
    </recommendedName>
</protein>
<dbReference type="EC" id="3.1.-.-" evidence="1"/>
<dbReference type="EMBL" id="BA000028">
    <property type="protein sequence ID" value="BAC13581.1"/>
    <property type="molecule type" value="Genomic_DNA"/>
</dbReference>
<dbReference type="RefSeq" id="WP_011066025.1">
    <property type="nucleotide sequence ID" value="NC_004193.1"/>
</dbReference>
<dbReference type="SMR" id="Q8EQR7"/>
<dbReference type="STRING" id="221109.gene:10733865"/>
<dbReference type="KEGG" id="oih:OB1625"/>
<dbReference type="eggNOG" id="COG1418">
    <property type="taxonomic scope" value="Bacteria"/>
</dbReference>
<dbReference type="HOGENOM" id="CLU_028328_1_0_9"/>
<dbReference type="OrthoDB" id="9803205at2"/>
<dbReference type="PhylomeDB" id="Q8EQR7"/>
<dbReference type="Proteomes" id="UP000000822">
    <property type="component" value="Chromosome"/>
</dbReference>
<dbReference type="GO" id="GO:0005886">
    <property type="term" value="C:plasma membrane"/>
    <property type="evidence" value="ECO:0007669"/>
    <property type="project" value="UniProtKB-SubCell"/>
</dbReference>
<dbReference type="GO" id="GO:0003723">
    <property type="term" value="F:RNA binding"/>
    <property type="evidence" value="ECO:0007669"/>
    <property type="project" value="UniProtKB-UniRule"/>
</dbReference>
<dbReference type="GO" id="GO:0004521">
    <property type="term" value="F:RNA endonuclease activity"/>
    <property type="evidence" value="ECO:0007669"/>
    <property type="project" value="UniProtKB-UniRule"/>
</dbReference>
<dbReference type="GO" id="GO:0006402">
    <property type="term" value="P:mRNA catabolic process"/>
    <property type="evidence" value="ECO:0007669"/>
    <property type="project" value="UniProtKB-UniRule"/>
</dbReference>
<dbReference type="CDD" id="cd00077">
    <property type="entry name" value="HDc"/>
    <property type="match status" value="1"/>
</dbReference>
<dbReference type="CDD" id="cd22431">
    <property type="entry name" value="KH-I_RNaseY"/>
    <property type="match status" value="1"/>
</dbReference>
<dbReference type="FunFam" id="1.10.3210.10:FF:000003">
    <property type="entry name" value="Ribonuclease Y"/>
    <property type="match status" value="1"/>
</dbReference>
<dbReference type="FunFam" id="3.30.1370.10:FF:000006">
    <property type="entry name" value="Ribonuclease Y"/>
    <property type="match status" value="1"/>
</dbReference>
<dbReference type="Gene3D" id="1.10.3210.10">
    <property type="entry name" value="Hypothetical protein af1432"/>
    <property type="match status" value="1"/>
</dbReference>
<dbReference type="Gene3D" id="3.30.1370.10">
    <property type="entry name" value="K Homology domain, type 1"/>
    <property type="match status" value="1"/>
</dbReference>
<dbReference type="HAMAP" id="MF_00335">
    <property type="entry name" value="RNase_Y"/>
    <property type="match status" value="1"/>
</dbReference>
<dbReference type="InterPro" id="IPR003607">
    <property type="entry name" value="HD/PDEase_dom"/>
</dbReference>
<dbReference type="InterPro" id="IPR006674">
    <property type="entry name" value="HD_domain"/>
</dbReference>
<dbReference type="InterPro" id="IPR006675">
    <property type="entry name" value="HDIG_dom"/>
</dbReference>
<dbReference type="InterPro" id="IPR004087">
    <property type="entry name" value="KH_dom"/>
</dbReference>
<dbReference type="InterPro" id="IPR004088">
    <property type="entry name" value="KH_dom_type_1"/>
</dbReference>
<dbReference type="InterPro" id="IPR036612">
    <property type="entry name" value="KH_dom_type_1_sf"/>
</dbReference>
<dbReference type="InterPro" id="IPR017705">
    <property type="entry name" value="Ribonuclease_Y"/>
</dbReference>
<dbReference type="InterPro" id="IPR022711">
    <property type="entry name" value="RNase_Y_N"/>
</dbReference>
<dbReference type="NCBIfam" id="TIGR00277">
    <property type="entry name" value="HDIG"/>
    <property type="match status" value="1"/>
</dbReference>
<dbReference type="NCBIfam" id="TIGR03319">
    <property type="entry name" value="RNase_Y"/>
    <property type="match status" value="1"/>
</dbReference>
<dbReference type="PANTHER" id="PTHR12826">
    <property type="entry name" value="RIBONUCLEASE Y"/>
    <property type="match status" value="1"/>
</dbReference>
<dbReference type="PANTHER" id="PTHR12826:SF15">
    <property type="entry name" value="RIBONUCLEASE Y"/>
    <property type="match status" value="1"/>
</dbReference>
<dbReference type="Pfam" id="PF01966">
    <property type="entry name" value="HD"/>
    <property type="match status" value="1"/>
</dbReference>
<dbReference type="Pfam" id="PF00013">
    <property type="entry name" value="KH_1"/>
    <property type="match status" value="1"/>
</dbReference>
<dbReference type="Pfam" id="PF12072">
    <property type="entry name" value="RNase_Y_N"/>
    <property type="match status" value="1"/>
</dbReference>
<dbReference type="SMART" id="SM00471">
    <property type="entry name" value="HDc"/>
    <property type="match status" value="1"/>
</dbReference>
<dbReference type="SMART" id="SM00322">
    <property type="entry name" value="KH"/>
    <property type="match status" value="1"/>
</dbReference>
<dbReference type="SUPFAM" id="SSF54791">
    <property type="entry name" value="Eukaryotic type KH-domain (KH-domain type I)"/>
    <property type="match status" value="1"/>
</dbReference>
<dbReference type="SUPFAM" id="SSF109604">
    <property type="entry name" value="HD-domain/PDEase-like"/>
    <property type="match status" value="1"/>
</dbReference>
<dbReference type="PROSITE" id="PS51831">
    <property type="entry name" value="HD"/>
    <property type="match status" value="1"/>
</dbReference>
<dbReference type="PROSITE" id="PS50084">
    <property type="entry name" value="KH_TYPE_1"/>
    <property type="match status" value="1"/>
</dbReference>
<evidence type="ECO:0000255" key="1">
    <source>
        <dbReference type="HAMAP-Rule" id="MF_00335"/>
    </source>
</evidence>
<evidence type="ECO:0000255" key="2">
    <source>
        <dbReference type="PROSITE-ProRule" id="PRU01175"/>
    </source>
</evidence>
<evidence type="ECO:0000256" key="3">
    <source>
        <dbReference type="SAM" id="MobiDB-lite"/>
    </source>
</evidence>
<name>RNY_OCEIH</name>
<comment type="function">
    <text evidence="1">Endoribonuclease that initiates mRNA decay.</text>
</comment>
<comment type="subcellular location">
    <subcellularLocation>
        <location evidence="1">Cell membrane</location>
        <topology evidence="1">Single-pass membrane protein</topology>
    </subcellularLocation>
</comment>
<comment type="similarity">
    <text evidence="1">Belongs to the RNase Y family.</text>
</comment>
<sequence length="520" mass="58626">MDIVIVVISILLALIVGIVVGYLVRRSIAEAKISSAERLAKQIVEEAHRNADAAKKEALLEAKDETHKFRQQAEDEIRERRMEAQKQENRLMQKEENLDRKSETLDKRESSLESKEQSLTEQQQQIEEMKSKVEAMKDEQQAELERISGYTSEQAKQIILERIEKEVQHESAVLIKESETRAKEEADKKAKNILSLALQRCAADHVAETTVSVVNLPNDEMKGRIIGREGRNIRTLETLTGIDLIIDDTPEAVILSGFDPIRREIARMALEKLVQDGRIHPARIEEMVEKSRREVDEYIREVGEETTFEVGVHGLHPDLVKILGRLKYRTSYGQNGLKHSAEVAYLSGLLAAELGEDVTLARRAGLLHDIGKAIDHEVEGSHVEIGKELAMKYKEHEVVINSIASHHGDEEATSIIAVLVAAADALSAARPGARSETLENYIKRLEKLEEISESFDGVEKSFAIQAGREIRIMVRPDEIDDIESISIARDIRKRIEGELDYPGHIKVTVIRETRAVEYAK</sequence>
<accession>Q8EQR7</accession>
<gene>
    <name evidence="1" type="primary">rny</name>
    <name type="ordered locus">OB1625</name>
</gene>
<keyword id="KW-1003">Cell membrane</keyword>
<keyword id="KW-0255">Endonuclease</keyword>
<keyword id="KW-0378">Hydrolase</keyword>
<keyword id="KW-0472">Membrane</keyword>
<keyword id="KW-0540">Nuclease</keyword>
<keyword id="KW-1185">Reference proteome</keyword>
<keyword id="KW-0694">RNA-binding</keyword>
<keyword id="KW-0812">Transmembrane</keyword>
<keyword id="KW-1133">Transmembrane helix</keyword>
<organism>
    <name type="scientific">Oceanobacillus iheyensis (strain DSM 14371 / CIP 107618 / JCM 11309 / KCTC 3954 / HTE831)</name>
    <dbReference type="NCBI Taxonomy" id="221109"/>
    <lineage>
        <taxon>Bacteria</taxon>
        <taxon>Bacillati</taxon>
        <taxon>Bacillota</taxon>
        <taxon>Bacilli</taxon>
        <taxon>Bacillales</taxon>
        <taxon>Bacillaceae</taxon>
        <taxon>Oceanobacillus</taxon>
    </lineage>
</organism>
<proteinExistence type="inferred from homology"/>